<sequence>MRRGLVIVGHGSQLNHYREVMELHRKRIEESGAFDEVKIAFAARKRRPMPDEAIREMNCDIIYVVPLFISYGLHVTEDLPDLLGFPRGRGIKEGEFEGKKVVICEPIGEDYFVTYAILNSVFRIGRDGKGEE</sequence>
<feature type="chain" id="PRO_0000150353" description="Sirohydrochlorin cobaltochelatase">
    <location>
        <begin position="1"/>
        <end position="132"/>
    </location>
</feature>
<feature type="active site" description="Proton acceptor" evidence="1 7">
    <location>
        <position position="10"/>
    </location>
</feature>
<feature type="binding site" evidence="1 6 7">
    <location>
        <position position="10"/>
    </location>
    <ligand>
        <name>Co(2+)</name>
        <dbReference type="ChEBI" id="CHEBI:48828"/>
    </ligand>
</feature>
<feature type="binding site" evidence="1 3 9">
    <location>
        <position position="46"/>
    </location>
    <ligand>
        <name>substrate</name>
    </ligand>
</feature>
<feature type="binding site" evidence="1 3 9">
    <location>
        <begin position="69"/>
        <end position="74"/>
    </location>
    <ligand>
        <name>substrate</name>
    </ligand>
</feature>
<feature type="binding site" evidence="1 6 7">
    <location>
        <position position="74"/>
    </location>
    <ligand>
        <name>Co(2+)</name>
        <dbReference type="ChEBI" id="CHEBI:48828"/>
    </ligand>
</feature>
<feature type="strand" evidence="11">
    <location>
        <begin position="3"/>
        <end position="9"/>
    </location>
</feature>
<feature type="helix" evidence="11">
    <location>
        <begin position="15"/>
        <end position="31"/>
    </location>
</feature>
<feature type="strand" evidence="11">
    <location>
        <begin position="33"/>
        <end position="43"/>
    </location>
</feature>
<feature type="helix" evidence="11">
    <location>
        <begin position="50"/>
        <end position="56"/>
    </location>
</feature>
<feature type="strand" evidence="11">
    <location>
        <begin position="60"/>
        <end position="66"/>
    </location>
</feature>
<feature type="strand" evidence="10">
    <location>
        <begin position="68"/>
        <end position="71"/>
    </location>
</feature>
<feature type="helix" evidence="11">
    <location>
        <begin position="73"/>
        <end position="76"/>
    </location>
</feature>
<feature type="helix" evidence="11">
    <location>
        <begin position="78"/>
        <end position="83"/>
    </location>
</feature>
<feature type="strand" evidence="11">
    <location>
        <begin position="88"/>
        <end position="90"/>
    </location>
</feature>
<feature type="strand" evidence="11">
    <location>
        <begin position="92"/>
        <end position="96"/>
    </location>
</feature>
<feature type="strand" evidence="11">
    <location>
        <begin position="99"/>
        <end position="103"/>
    </location>
</feature>
<feature type="helix" evidence="11">
    <location>
        <begin position="111"/>
        <end position="122"/>
    </location>
</feature>
<gene>
    <name evidence="1 4" type="primary">cbiX</name>
    <name evidence="4" type="synonym">cbiXS</name>
    <name evidence="8" type="ordered locus">AF_0721</name>
</gene>
<comment type="function">
    <text evidence="1 2">Catalyzes the insertion of Co(2+) into sirohydrochlorin as part of the anaerobic pathway to cobalamin biosynthesis.</text>
</comment>
<comment type="catalytic activity">
    <reaction evidence="1 2">
        <text>Co-sirohydrochlorin + 2 H(+) = sirohydrochlorin + Co(2+)</text>
        <dbReference type="Rhea" id="RHEA:15893"/>
        <dbReference type="ChEBI" id="CHEBI:15378"/>
        <dbReference type="ChEBI" id="CHEBI:48828"/>
        <dbReference type="ChEBI" id="CHEBI:58351"/>
        <dbReference type="ChEBI" id="CHEBI:60049"/>
        <dbReference type="EC" id="4.99.1.3"/>
    </reaction>
</comment>
<comment type="pathway">
    <text evidence="1 6">Cofactor biosynthesis; adenosylcobalamin biosynthesis; cob(II)yrinate a,c-diamide from sirohydrochlorin (anaerobic route): step 1/10.</text>
</comment>
<comment type="subunit">
    <text evidence="1 2 3">Homotetramer; dimer of dimers.</text>
</comment>
<comment type="similarity">
    <text evidence="1 5">Belongs to the CbiX family. CbiXS subfamily.</text>
</comment>
<keyword id="KW-0002">3D-structure</keyword>
<keyword id="KW-0169">Cobalamin biosynthesis</keyword>
<keyword id="KW-0170">Cobalt</keyword>
<keyword id="KW-0456">Lyase</keyword>
<keyword id="KW-0479">Metal-binding</keyword>
<keyword id="KW-1185">Reference proteome</keyword>
<dbReference type="EC" id="4.99.1.3" evidence="1 2"/>
<dbReference type="EMBL" id="AE000782">
    <property type="protein sequence ID" value="AAB90530.1"/>
    <property type="molecule type" value="Genomic_DNA"/>
</dbReference>
<dbReference type="PIR" id="A69340">
    <property type="entry name" value="A69340"/>
</dbReference>
<dbReference type="RefSeq" id="WP_010878224.1">
    <property type="nucleotide sequence ID" value="NC_000917.1"/>
</dbReference>
<dbReference type="PDB" id="1TJN">
    <property type="method" value="X-ray"/>
    <property type="resolution" value="2.01 A"/>
    <property type="chains" value="A=1-132"/>
</dbReference>
<dbReference type="PDB" id="2DJ5">
    <property type="method" value="X-ray"/>
    <property type="resolution" value="2.55 A"/>
    <property type="chains" value="A/B=1-132"/>
</dbReference>
<dbReference type="PDB" id="2XWQ">
    <property type="method" value="X-ray"/>
    <property type="resolution" value="2.01 A"/>
    <property type="chains" value="A/B/C/D=1-132"/>
</dbReference>
<dbReference type="PDB" id="2XWS">
    <property type="method" value="X-ray"/>
    <property type="resolution" value="1.60 A"/>
    <property type="chains" value="A=1-132"/>
</dbReference>
<dbReference type="PDBsum" id="1TJN"/>
<dbReference type="PDBsum" id="2DJ5"/>
<dbReference type="PDBsum" id="2XWQ"/>
<dbReference type="PDBsum" id="2XWS"/>
<dbReference type="SMR" id="O29537"/>
<dbReference type="DIP" id="DIP-59586N"/>
<dbReference type="STRING" id="224325.AF_0721"/>
<dbReference type="PaxDb" id="224325-AF_0721"/>
<dbReference type="EnsemblBacteria" id="AAB90530">
    <property type="protein sequence ID" value="AAB90530"/>
    <property type="gene ID" value="AF_0721"/>
</dbReference>
<dbReference type="GeneID" id="24794319"/>
<dbReference type="KEGG" id="afu:AF_0721"/>
<dbReference type="eggNOG" id="arCOG02246">
    <property type="taxonomic scope" value="Archaea"/>
</dbReference>
<dbReference type="HOGENOM" id="CLU_065901_2_1_2"/>
<dbReference type="OrthoDB" id="11653at2157"/>
<dbReference type="PhylomeDB" id="O29537"/>
<dbReference type="BRENDA" id="4.99.1.3">
    <property type="organism ID" value="414"/>
</dbReference>
<dbReference type="UniPathway" id="UPA00148">
    <property type="reaction ID" value="UER00223"/>
</dbReference>
<dbReference type="EvolutionaryTrace" id="O29537"/>
<dbReference type="Proteomes" id="UP000002199">
    <property type="component" value="Chromosome"/>
</dbReference>
<dbReference type="GO" id="GO:0050897">
    <property type="term" value="F:cobalt ion binding"/>
    <property type="evidence" value="ECO:0000314"/>
    <property type="project" value="UniProtKB"/>
</dbReference>
<dbReference type="GO" id="GO:0016852">
    <property type="term" value="F:sirohydrochlorin cobaltochelatase activity"/>
    <property type="evidence" value="ECO:0000314"/>
    <property type="project" value="UniProtKB"/>
</dbReference>
<dbReference type="GO" id="GO:0046906">
    <property type="term" value="F:tetrapyrrole binding"/>
    <property type="evidence" value="ECO:0000314"/>
    <property type="project" value="UniProtKB"/>
</dbReference>
<dbReference type="GO" id="GO:0019251">
    <property type="term" value="P:anaerobic cobalamin biosynthetic process"/>
    <property type="evidence" value="ECO:0000304"/>
    <property type="project" value="UniProtKB"/>
</dbReference>
<dbReference type="CDD" id="cd03409">
    <property type="entry name" value="Chelatase_Class_II"/>
    <property type="match status" value="1"/>
</dbReference>
<dbReference type="FunFam" id="3.40.50.1400:FF:000030">
    <property type="entry name" value="Sirohydrochlorin cobaltochelatase"/>
    <property type="match status" value="1"/>
</dbReference>
<dbReference type="Gene3D" id="3.40.50.1400">
    <property type="match status" value="1"/>
</dbReference>
<dbReference type="HAMAP" id="MF_00785">
    <property type="entry name" value="CbiX"/>
    <property type="match status" value="1"/>
</dbReference>
<dbReference type="InterPro" id="IPR002762">
    <property type="entry name" value="CbiX-like"/>
</dbReference>
<dbReference type="InterPro" id="IPR023652">
    <property type="entry name" value="SiroHydchlorin_Cochelatase"/>
</dbReference>
<dbReference type="Pfam" id="PF01903">
    <property type="entry name" value="CbiX"/>
    <property type="match status" value="1"/>
</dbReference>
<dbReference type="SUPFAM" id="SSF53800">
    <property type="entry name" value="Chelatase"/>
    <property type="match status" value="1"/>
</dbReference>
<proteinExistence type="evidence at protein level"/>
<accession>O29537</accession>
<reference key="1">
    <citation type="journal article" date="1997" name="Nature">
        <title>The complete genome sequence of the hyperthermophilic, sulphate-reducing archaeon Archaeoglobus fulgidus.</title>
        <authorList>
            <person name="Klenk H.-P."/>
            <person name="Clayton R.A."/>
            <person name="Tomb J.-F."/>
            <person name="White O."/>
            <person name="Nelson K.E."/>
            <person name="Ketchum K.A."/>
            <person name="Dodson R.J."/>
            <person name="Gwinn M.L."/>
            <person name="Hickey E.K."/>
            <person name="Peterson J.D."/>
            <person name="Richardson D.L."/>
            <person name="Kerlavage A.R."/>
            <person name="Graham D.E."/>
            <person name="Kyrpides N.C."/>
            <person name="Fleischmann R.D."/>
            <person name="Quackenbush J."/>
            <person name="Lee N.H."/>
            <person name="Sutton G.G."/>
            <person name="Gill S.R."/>
            <person name="Kirkness E.F."/>
            <person name="Dougherty B.A."/>
            <person name="McKenney K."/>
            <person name="Adams M.D."/>
            <person name="Loftus B.J."/>
            <person name="Peterson S.N."/>
            <person name="Reich C.I."/>
            <person name="McNeil L.K."/>
            <person name="Badger J.H."/>
            <person name="Glodek A."/>
            <person name="Zhou L."/>
            <person name="Overbeek R."/>
            <person name="Gocayne J.D."/>
            <person name="Weidman J.F."/>
            <person name="McDonald L.A."/>
            <person name="Utterback T.R."/>
            <person name="Cotton M.D."/>
            <person name="Spriggs T."/>
            <person name="Artiach P."/>
            <person name="Kaine B.P."/>
            <person name="Sykes S.M."/>
            <person name="Sadow P.W."/>
            <person name="D'Andrea K.P."/>
            <person name="Bowman C."/>
            <person name="Fujii C."/>
            <person name="Garland S.A."/>
            <person name="Mason T.M."/>
            <person name="Olsen G.J."/>
            <person name="Fraser C.M."/>
            <person name="Smith H.O."/>
            <person name="Woese C.R."/>
            <person name="Venter J.C."/>
        </authorList>
    </citation>
    <scope>NUCLEOTIDE SEQUENCE [LARGE SCALE GENOMIC DNA]</scope>
    <source>
        <strain>ATCC 49558 / DSM 4304 / JCM 9628 / NBRC 100126 / VC-16</strain>
    </source>
</reference>
<reference key="2">
    <citation type="journal article" date="2006" name="J. Struct. Funct. Genomics">
        <title>Crystal structure of the vitamin B12 biosynthetic cobaltochelatase, CbiXS, from Archaeoglobus fulgidus.</title>
        <authorList>
            <person name="Yin J."/>
            <person name="Xu L.X."/>
            <person name="Cherney M.M."/>
            <person name="Raux-Deery E."/>
            <person name="Bindley A.A."/>
            <person name="Savchenko A."/>
            <person name="Walker J.R."/>
            <person name="Cuff M.E."/>
            <person name="Warren M.J."/>
            <person name="James M.N."/>
        </authorList>
    </citation>
    <scope>X-RAY CRYSTALLOGRAPHY (2.01 ANGSTROMS)</scope>
    <scope>FUNCTION</scope>
    <scope>CATALYTIC ACTIVITY</scope>
    <scope>PATHWAY</scope>
    <scope>SUBUNIT</scope>
</reference>
<reference key="3">
    <citation type="journal article" date="2011" name="Proc. Natl. Acad. Sci. U.S.A.">
        <title>Evolution in a family of chelatases facilitated by the introduction of active site asymmetry and protein oligomerization.</title>
        <authorList>
            <person name="Romao C.V."/>
            <person name="Ladakis D."/>
            <person name="Lobo S.A."/>
            <person name="Carrondo M.A."/>
            <person name="Brindley A.A."/>
            <person name="Deery E."/>
            <person name="Matias P.M."/>
            <person name="Pickersgill R.W."/>
            <person name="Saraiva L.M."/>
            <person name="Warren M.J."/>
        </authorList>
    </citation>
    <scope>X-RAY CRYSTALLOGRAPHY (1.6 ANGSTROMS) OF NATIVE PROTEIN AND COMPLEX WITH COBALT-SIROHYDROCHLORIN</scope>
    <scope>ACTIVE SITE</scope>
    <scope>SUBUNIT</scope>
</reference>
<name>CBIX_ARCFU</name>
<organism>
    <name type="scientific">Archaeoglobus fulgidus (strain ATCC 49558 / DSM 4304 / JCM 9628 / NBRC 100126 / VC-16)</name>
    <dbReference type="NCBI Taxonomy" id="224325"/>
    <lineage>
        <taxon>Archaea</taxon>
        <taxon>Methanobacteriati</taxon>
        <taxon>Methanobacteriota</taxon>
        <taxon>Archaeoglobi</taxon>
        <taxon>Archaeoglobales</taxon>
        <taxon>Archaeoglobaceae</taxon>
        <taxon>Archaeoglobus</taxon>
    </lineage>
</organism>
<evidence type="ECO:0000255" key="1">
    <source>
        <dbReference type="HAMAP-Rule" id="MF_00785"/>
    </source>
</evidence>
<evidence type="ECO:0000269" key="2">
    <source>
    </source>
</evidence>
<evidence type="ECO:0000269" key="3">
    <source>
    </source>
</evidence>
<evidence type="ECO:0000303" key="4">
    <source>
    </source>
</evidence>
<evidence type="ECO:0000305" key="5"/>
<evidence type="ECO:0000305" key="6">
    <source>
    </source>
</evidence>
<evidence type="ECO:0000305" key="7">
    <source>
    </source>
</evidence>
<evidence type="ECO:0000312" key="8">
    <source>
        <dbReference type="EMBL" id="AAB90530.1"/>
    </source>
</evidence>
<evidence type="ECO:0007744" key="9">
    <source>
        <dbReference type="PDB" id="2XWQ"/>
    </source>
</evidence>
<evidence type="ECO:0007829" key="10">
    <source>
        <dbReference type="PDB" id="2XWQ"/>
    </source>
</evidence>
<evidence type="ECO:0007829" key="11">
    <source>
        <dbReference type="PDB" id="2XWS"/>
    </source>
</evidence>
<protein>
    <recommendedName>
        <fullName evidence="1 4">Sirohydrochlorin cobaltochelatase</fullName>
        <ecNumber evidence="1 2">4.99.1.3</ecNumber>
    </recommendedName>
    <alternativeName>
        <fullName evidence="1 4">CbiXS</fullName>
    </alternativeName>
</protein>